<keyword id="KW-0028">Amino-acid biosynthesis</keyword>
<keyword id="KW-0057">Aromatic amino acid biosynthesis</keyword>
<keyword id="KW-0456">Lyase</keyword>
<keyword id="KW-0663">Pyridoxal phosphate</keyword>
<keyword id="KW-0822">Tryptophan biosynthesis</keyword>
<comment type="function">
    <text evidence="1">The beta subunit is responsible for the synthesis of L-tryptophan from indole and L-serine.</text>
</comment>
<comment type="catalytic activity">
    <reaction evidence="1">
        <text>(1S,2R)-1-C-(indol-3-yl)glycerol 3-phosphate + L-serine = D-glyceraldehyde 3-phosphate + L-tryptophan + H2O</text>
        <dbReference type="Rhea" id="RHEA:10532"/>
        <dbReference type="ChEBI" id="CHEBI:15377"/>
        <dbReference type="ChEBI" id="CHEBI:33384"/>
        <dbReference type="ChEBI" id="CHEBI:57912"/>
        <dbReference type="ChEBI" id="CHEBI:58866"/>
        <dbReference type="ChEBI" id="CHEBI:59776"/>
        <dbReference type="EC" id="4.2.1.20"/>
    </reaction>
</comment>
<comment type="cofactor">
    <cofactor evidence="1">
        <name>pyridoxal 5'-phosphate</name>
        <dbReference type="ChEBI" id="CHEBI:597326"/>
    </cofactor>
</comment>
<comment type="pathway">
    <text evidence="1">Amino-acid biosynthesis; L-tryptophan biosynthesis; L-tryptophan from chorismate: step 5/5.</text>
</comment>
<comment type="subunit">
    <text evidence="1">Tetramer of two alpha and two beta chains.</text>
</comment>
<comment type="similarity">
    <text evidence="1">Belongs to the TrpB family.</text>
</comment>
<name>TRPB_ECOSM</name>
<reference key="1">
    <citation type="journal article" date="2008" name="J. Bacteriol.">
        <title>Insights into the environmental resistance gene pool from the genome sequence of the multidrug-resistant environmental isolate Escherichia coli SMS-3-5.</title>
        <authorList>
            <person name="Fricke W.F."/>
            <person name="Wright M.S."/>
            <person name="Lindell A.H."/>
            <person name="Harkins D.M."/>
            <person name="Baker-Austin C."/>
            <person name="Ravel J."/>
            <person name="Stepanauskas R."/>
        </authorList>
    </citation>
    <scope>NUCLEOTIDE SEQUENCE [LARGE SCALE GENOMIC DNA]</scope>
    <source>
        <strain>SMS-3-5 / SECEC</strain>
    </source>
</reference>
<feature type="chain" id="PRO_1000117757" description="Tryptophan synthase beta chain">
    <location>
        <begin position="1"/>
        <end position="397"/>
    </location>
</feature>
<feature type="modified residue" description="N6-(pyridoxal phosphate)lysine" evidence="1">
    <location>
        <position position="87"/>
    </location>
</feature>
<gene>
    <name evidence="1" type="primary">trpB</name>
    <name type="ordered locus">EcSMS35_1871</name>
</gene>
<sequence length="397" mass="42998">MTTLLNPYFGEFGGMYVPQILMPALRQLEEAFVSAQKDPEFQAQFNDLLKNYAGRPTALTKCQNITAGTNTTLYLKREDLLHGGAHKTNQVLGQALLAKRMGKTEIIAETGAGQHGVASALASALLGLKCRIYMGAKDVERQSPNVFRMRLMGAEVIPVHSGSATLKDACNEALRDWSGSYETAHYMLGTAAGPHPYPTIVREFQRMIGEETKAQILEREGRLPDAVIACVGGGSNAIGMFADFINETDVGLIGVEPGGHGIETGEHGAPLKHGRVGIYFGMKAPMMQTEDGQIEESYSISAGLDFPSVGPQHAYLNSTGRADYVSITDDEALEAFKTLCLHEGIIPALESSHALAHALKMMRENPEKEQLLVVNLSGRGDKDIFTVHDILKARGEI</sequence>
<accession>B1LH31</accession>
<dbReference type="EC" id="4.2.1.20" evidence="1"/>
<dbReference type="EMBL" id="CP000970">
    <property type="protein sequence ID" value="ACB19307.1"/>
    <property type="molecule type" value="Genomic_DNA"/>
</dbReference>
<dbReference type="RefSeq" id="WP_000209513.1">
    <property type="nucleotide sequence ID" value="NC_010498.1"/>
</dbReference>
<dbReference type="SMR" id="B1LH31"/>
<dbReference type="GeneID" id="75171375"/>
<dbReference type="KEGG" id="ecm:EcSMS35_1871"/>
<dbReference type="HOGENOM" id="CLU_016734_3_1_6"/>
<dbReference type="UniPathway" id="UPA00035">
    <property type="reaction ID" value="UER00044"/>
</dbReference>
<dbReference type="Proteomes" id="UP000007011">
    <property type="component" value="Chromosome"/>
</dbReference>
<dbReference type="GO" id="GO:0005737">
    <property type="term" value="C:cytoplasm"/>
    <property type="evidence" value="ECO:0007669"/>
    <property type="project" value="TreeGrafter"/>
</dbReference>
<dbReference type="GO" id="GO:0004834">
    <property type="term" value="F:tryptophan synthase activity"/>
    <property type="evidence" value="ECO:0007669"/>
    <property type="project" value="UniProtKB-UniRule"/>
</dbReference>
<dbReference type="CDD" id="cd06446">
    <property type="entry name" value="Trp-synth_B"/>
    <property type="match status" value="1"/>
</dbReference>
<dbReference type="FunFam" id="3.40.50.1100:FF:000001">
    <property type="entry name" value="Tryptophan synthase beta chain"/>
    <property type="match status" value="1"/>
</dbReference>
<dbReference type="FunFam" id="3.40.50.1100:FF:000004">
    <property type="entry name" value="Tryptophan synthase beta chain"/>
    <property type="match status" value="1"/>
</dbReference>
<dbReference type="Gene3D" id="3.40.50.1100">
    <property type="match status" value="2"/>
</dbReference>
<dbReference type="HAMAP" id="MF_00133">
    <property type="entry name" value="Trp_synth_beta"/>
    <property type="match status" value="1"/>
</dbReference>
<dbReference type="InterPro" id="IPR006653">
    <property type="entry name" value="Trp_synth_b_CS"/>
</dbReference>
<dbReference type="InterPro" id="IPR006654">
    <property type="entry name" value="Trp_synth_beta"/>
</dbReference>
<dbReference type="InterPro" id="IPR023026">
    <property type="entry name" value="Trp_synth_beta/beta-like"/>
</dbReference>
<dbReference type="InterPro" id="IPR001926">
    <property type="entry name" value="TrpB-like_PALP"/>
</dbReference>
<dbReference type="InterPro" id="IPR036052">
    <property type="entry name" value="TrpB-like_PALP_sf"/>
</dbReference>
<dbReference type="NCBIfam" id="TIGR00263">
    <property type="entry name" value="trpB"/>
    <property type="match status" value="1"/>
</dbReference>
<dbReference type="PANTHER" id="PTHR48077:SF3">
    <property type="entry name" value="TRYPTOPHAN SYNTHASE"/>
    <property type="match status" value="1"/>
</dbReference>
<dbReference type="PANTHER" id="PTHR48077">
    <property type="entry name" value="TRYPTOPHAN SYNTHASE-RELATED"/>
    <property type="match status" value="1"/>
</dbReference>
<dbReference type="Pfam" id="PF00291">
    <property type="entry name" value="PALP"/>
    <property type="match status" value="1"/>
</dbReference>
<dbReference type="PIRSF" id="PIRSF001413">
    <property type="entry name" value="Trp_syn_beta"/>
    <property type="match status" value="1"/>
</dbReference>
<dbReference type="SUPFAM" id="SSF53686">
    <property type="entry name" value="Tryptophan synthase beta subunit-like PLP-dependent enzymes"/>
    <property type="match status" value="1"/>
</dbReference>
<dbReference type="PROSITE" id="PS00168">
    <property type="entry name" value="TRP_SYNTHASE_BETA"/>
    <property type="match status" value="1"/>
</dbReference>
<organism>
    <name type="scientific">Escherichia coli (strain SMS-3-5 / SECEC)</name>
    <dbReference type="NCBI Taxonomy" id="439855"/>
    <lineage>
        <taxon>Bacteria</taxon>
        <taxon>Pseudomonadati</taxon>
        <taxon>Pseudomonadota</taxon>
        <taxon>Gammaproteobacteria</taxon>
        <taxon>Enterobacterales</taxon>
        <taxon>Enterobacteriaceae</taxon>
        <taxon>Escherichia</taxon>
    </lineage>
</organism>
<proteinExistence type="inferred from homology"/>
<protein>
    <recommendedName>
        <fullName evidence="1">Tryptophan synthase beta chain</fullName>
        <ecNumber evidence="1">4.2.1.20</ecNumber>
    </recommendedName>
</protein>
<evidence type="ECO:0000255" key="1">
    <source>
        <dbReference type="HAMAP-Rule" id="MF_00133"/>
    </source>
</evidence>